<keyword id="KW-0963">Cytoplasm</keyword>
<keyword id="KW-0328">Glycosyltransferase</keyword>
<keyword id="KW-0660">Purine salvage</keyword>
<keyword id="KW-0808">Transferase</keyword>
<accession>Q2T199</accession>
<feature type="chain" id="PRO_0000321350" description="Adenine phosphoribosyltransferase">
    <location>
        <begin position="1"/>
        <end position="188"/>
    </location>
</feature>
<evidence type="ECO:0000255" key="1">
    <source>
        <dbReference type="HAMAP-Rule" id="MF_00004"/>
    </source>
</evidence>
<name>APT_BURTA</name>
<proteinExistence type="inferred from homology"/>
<comment type="function">
    <text evidence="1">Catalyzes a salvage reaction resulting in the formation of AMP, that is energically less costly than de novo synthesis.</text>
</comment>
<comment type="catalytic activity">
    <reaction evidence="1">
        <text>AMP + diphosphate = 5-phospho-alpha-D-ribose 1-diphosphate + adenine</text>
        <dbReference type="Rhea" id="RHEA:16609"/>
        <dbReference type="ChEBI" id="CHEBI:16708"/>
        <dbReference type="ChEBI" id="CHEBI:33019"/>
        <dbReference type="ChEBI" id="CHEBI:58017"/>
        <dbReference type="ChEBI" id="CHEBI:456215"/>
        <dbReference type="EC" id="2.4.2.7"/>
    </reaction>
</comment>
<comment type="pathway">
    <text evidence="1">Purine metabolism; AMP biosynthesis via salvage pathway; AMP from adenine: step 1/1.</text>
</comment>
<comment type="subunit">
    <text evidence="1">Homodimer.</text>
</comment>
<comment type="subcellular location">
    <subcellularLocation>
        <location evidence="1">Cytoplasm</location>
    </subcellularLocation>
</comment>
<comment type="similarity">
    <text evidence="1">Belongs to the purine/pyrimidine phosphoribosyltransferase family.</text>
</comment>
<organism>
    <name type="scientific">Burkholderia thailandensis (strain ATCC 700388 / DSM 13276 / CCUG 48851 / CIP 106301 / E264)</name>
    <dbReference type="NCBI Taxonomy" id="271848"/>
    <lineage>
        <taxon>Bacteria</taxon>
        <taxon>Pseudomonadati</taxon>
        <taxon>Pseudomonadota</taxon>
        <taxon>Betaproteobacteria</taxon>
        <taxon>Burkholderiales</taxon>
        <taxon>Burkholderiaceae</taxon>
        <taxon>Burkholderia</taxon>
        <taxon>pseudomallei group</taxon>
    </lineage>
</organism>
<protein>
    <recommendedName>
        <fullName evidence="1">Adenine phosphoribosyltransferase</fullName>
        <shortName evidence="1">APRT</shortName>
        <ecNumber evidence="1">2.4.2.7</ecNumber>
    </recommendedName>
</protein>
<sequence>MMSTSSDAQLDPVEFIHSRIRTVPNWPQPGVMFRDITPLLQSAKAMRVLVDLFVERYVDAKLDYIAGLDARGFIIAPIVAYELSVGFVPIRKVGKLPYKTQRESYALEYGTATVEIHEDACKPGDRVVIVDDLIATGGTMMAGKNLLDRLGAVVVEGAAIVDLPDLGGSALLRGAGLSLYTVTEFAGH</sequence>
<gene>
    <name evidence="1" type="primary">apt</name>
    <name type="ordered locus">BTH_I0493</name>
</gene>
<reference key="1">
    <citation type="journal article" date="2005" name="BMC Genomics">
        <title>Bacterial genome adaptation to niches: divergence of the potential virulence genes in three Burkholderia species of different survival strategies.</title>
        <authorList>
            <person name="Kim H.S."/>
            <person name="Schell M.A."/>
            <person name="Yu Y."/>
            <person name="Ulrich R.L."/>
            <person name="Sarria S.H."/>
            <person name="Nierman W.C."/>
            <person name="DeShazer D."/>
        </authorList>
    </citation>
    <scope>NUCLEOTIDE SEQUENCE [LARGE SCALE GENOMIC DNA]</scope>
    <source>
        <strain>ATCC 700388 / DSM 13276 / CCUG 48851 / CIP 106301 / E264</strain>
    </source>
</reference>
<dbReference type="EC" id="2.4.2.7" evidence="1"/>
<dbReference type="EMBL" id="CP000086">
    <property type="protein sequence ID" value="ABC37724.1"/>
    <property type="molecule type" value="Genomic_DNA"/>
</dbReference>
<dbReference type="RefSeq" id="WP_009893039.1">
    <property type="nucleotide sequence ID" value="NZ_CP008785.1"/>
</dbReference>
<dbReference type="SMR" id="Q2T199"/>
<dbReference type="GeneID" id="45120256"/>
<dbReference type="KEGG" id="bte:BTH_I0493"/>
<dbReference type="HOGENOM" id="CLU_063339_3_0_4"/>
<dbReference type="UniPathway" id="UPA00588">
    <property type="reaction ID" value="UER00646"/>
</dbReference>
<dbReference type="Proteomes" id="UP000001930">
    <property type="component" value="Chromosome I"/>
</dbReference>
<dbReference type="GO" id="GO:0005737">
    <property type="term" value="C:cytoplasm"/>
    <property type="evidence" value="ECO:0007669"/>
    <property type="project" value="UniProtKB-SubCell"/>
</dbReference>
<dbReference type="GO" id="GO:0002055">
    <property type="term" value="F:adenine binding"/>
    <property type="evidence" value="ECO:0007669"/>
    <property type="project" value="TreeGrafter"/>
</dbReference>
<dbReference type="GO" id="GO:0003999">
    <property type="term" value="F:adenine phosphoribosyltransferase activity"/>
    <property type="evidence" value="ECO:0007669"/>
    <property type="project" value="UniProtKB-UniRule"/>
</dbReference>
<dbReference type="GO" id="GO:0016208">
    <property type="term" value="F:AMP binding"/>
    <property type="evidence" value="ECO:0007669"/>
    <property type="project" value="TreeGrafter"/>
</dbReference>
<dbReference type="GO" id="GO:0006168">
    <property type="term" value="P:adenine salvage"/>
    <property type="evidence" value="ECO:0007669"/>
    <property type="project" value="InterPro"/>
</dbReference>
<dbReference type="GO" id="GO:0044209">
    <property type="term" value="P:AMP salvage"/>
    <property type="evidence" value="ECO:0007669"/>
    <property type="project" value="UniProtKB-UniRule"/>
</dbReference>
<dbReference type="GO" id="GO:0006166">
    <property type="term" value="P:purine ribonucleoside salvage"/>
    <property type="evidence" value="ECO:0007669"/>
    <property type="project" value="UniProtKB-KW"/>
</dbReference>
<dbReference type="CDD" id="cd06223">
    <property type="entry name" value="PRTases_typeI"/>
    <property type="match status" value="1"/>
</dbReference>
<dbReference type="FunFam" id="3.40.50.2020:FF:000021">
    <property type="entry name" value="Adenine phosphoribosyltransferase"/>
    <property type="match status" value="1"/>
</dbReference>
<dbReference type="Gene3D" id="3.40.50.2020">
    <property type="match status" value="1"/>
</dbReference>
<dbReference type="HAMAP" id="MF_00004">
    <property type="entry name" value="Aden_phosphoribosyltr"/>
    <property type="match status" value="1"/>
</dbReference>
<dbReference type="InterPro" id="IPR005764">
    <property type="entry name" value="Ade_phspho_trans"/>
</dbReference>
<dbReference type="InterPro" id="IPR000836">
    <property type="entry name" value="PRibTrfase_dom"/>
</dbReference>
<dbReference type="InterPro" id="IPR029057">
    <property type="entry name" value="PRTase-like"/>
</dbReference>
<dbReference type="InterPro" id="IPR050054">
    <property type="entry name" value="UPRTase/APRTase"/>
</dbReference>
<dbReference type="NCBIfam" id="TIGR01090">
    <property type="entry name" value="apt"/>
    <property type="match status" value="1"/>
</dbReference>
<dbReference type="NCBIfam" id="NF002634">
    <property type="entry name" value="PRK02304.1-3"/>
    <property type="match status" value="1"/>
</dbReference>
<dbReference type="NCBIfam" id="NF002636">
    <property type="entry name" value="PRK02304.1-5"/>
    <property type="match status" value="1"/>
</dbReference>
<dbReference type="PANTHER" id="PTHR32315">
    <property type="entry name" value="ADENINE PHOSPHORIBOSYLTRANSFERASE"/>
    <property type="match status" value="1"/>
</dbReference>
<dbReference type="PANTHER" id="PTHR32315:SF3">
    <property type="entry name" value="ADENINE PHOSPHORIBOSYLTRANSFERASE"/>
    <property type="match status" value="1"/>
</dbReference>
<dbReference type="Pfam" id="PF00156">
    <property type="entry name" value="Pribosyltran"/>
    <property type="match status" value="1"/>
</dbReference>
<dbReference type="SUPFAM" id="SSF53271">
    <property type="entry name" value="PRTase-like"/>
    <property type="match status" value="1"/>
</dbReference>
<dbReference type="PROSITE" id="PS00103">
    <property type="entry name" value="PUR_PYR_PR_TRANSFER"/>
    <property type="match status" value="1"/>
</dbReference>